<proteinExistence type="inferred from homology"/>
<organism>
    <name type="scientific">Streptococcus pneumoniae (strain ATCC 700669 / Spain 23F-1)</name>
    <dbReference type="NCBI Taxonomy" id="561276"/>
    <lineage>
        <taxon>Bacteria</taxon>
        <taxon>Bacillati</taxon>
        <taxon>Bacillota</taxon>
        <taxon>Bacilli</taxon>
        <taxon>Lactobacillales</taxon>
        <taxon>Streptococcaceae</taxon>
        <taxon>Streptococcus</taxon>
    </lineage>
</organism>
<protein>
    <recommendedName>
        <fullName evidence="1">Small ribosomal subunit protein uS13</fullName>
    </recommendedName>
    <alternativeName>
        <fullName evidence="3">30S ribosomal protein S13</fullName>
    </alternativeName>
</protein>
<evidence type="ECO:0000255" key="1">
    <source>
        <dbReference type="HAMAP-Rule" id="MF_01315"/>
    </source>
</evidence>
<evidence type="ECO:0000256" key="2">
    <source>
        <dbReference type="SAM" id="MobiDB-lite"/>
    </source>
</evidence>
<evidence type="ECO:0000305" key="3"/>
<name>RS13_STRPJ</name>
<sequence>MARIAGVDIPNDKRVVISLTYVYGIGLATSKKILAAAGISEDVRVRDLTSDQEDAIRREVDAIKVEGDLRREVNLNIKRLMEIGSYRGIRHRRGLPVRGQNTKNNARTRKGKAVAIAGKKK</sequence>
<accession>B8ZKQ3</accession>
<reference key="1">
    <citation type="journal article" date="2009" name="J. Bacteriol.">
        <title>Role of conjugative elements in the evolution of the multidrug-resistant pandemic clone Streptococcus pneumoniae Spain23F ST81.</title>
        <authorList>
            <person name="Croucher N.J."/>
            <person name="Walker D."/>
            <person name="Romero P."/>
            <person name="Lennard N."/>
            <person name="Paterson G.K."/>
            <person name="Bason N.C."/>
            <person name="Mitchell A.M."/>
            <person name="Quail M.A."/>
            <person name="Andrew P.W."/>
            <person name="Parkhill J."/>
            <person name="Bentley S.D."/>
            <person name="Mitchell T.J."/>
        </authorList>
    </citation>
    <scope>NUCLEOTIDE SEQUENCE [LARGE SCALE GENOMIC DNA]</scope>
    <source>
        <strain>ATCC 700669 / Spain 23F-1</strain>
    </source>
</reference>
<comment type="function">
    <text evidence="1">Located at the top of the head of the 30S subunit, it contacts several helices of the 16S rRNA. In the 70S ribosome it contacts the 23S rRNA (bridge B1a) and protein L5 of the 50S subunit (bridge B1b), connecting the 2 subunits; these bridges are implicated in subunit movement. Contacts the tRNAs in the A and P-sites.</text>
</comment>
<comment type="subunit">
    <text evidence="1">Part of the 30S ribosomal subunit. Forms a loose heterodimer with protein S19. Forms two bridges to the 50S subunit in the 70S ribosome.</text>
</comment>
<comment type="similarity">
    <text evidence="1">Belongs to the universal ribosomal protein uS13 family.</text>
</comment>
<feature type="chain" id="PRO_1000165640" description="Small ribosomal subunit protein uS13">
    <location>
        <begin position="1"/>
        <end position="121"/>
    </location>
</feature>
<feature type="region of interest" description="Disordered" evidence="2">
    <location>
        <begin position="96"/>
        <end position="121"/>
    </location>
</feature>
<feature type="compositionally biased region" description="Basic residues" evidence="2">
    <location>
        <begin position="106"/>
        <end position="121"/>
    </location>
</feature>
<dbReference type="EMBL" id="FM211187">
    <property type="protein sequence ID" value="CAR68082.1"/>
    <property type="molecule type" value="Genomic_DNA"/>
</dbReference>
<dbReference type="RefSeq" id="WP_000090781.1">
    <property type="nucleotide sequence ID" value="NC_011900.1"/>
</dbReference>
<dbReference type="SMR" id="B8ZKQ3"/>
<dbReference type="GeneID" id="93738981"/>
<dbReference type="KEGG" id="sne:SPN23F02220"/>
<dbReference type="HOGENOM" id="CLU_103849_1_1_9"/>
<dbReference type="GO" id="GO:0005829">
    <property type="term" value="C:cytosol"/>
    <property type="evidence" value="ECO:0007669"/>
    <property type="project" value="TreeGrafter"/>
</dbReference>
<dbReference type="GO" id="GO:0015935">
    <property type="term" value="C:small ribosomal subunit"/>
    <property type="evidence" value="ECO:0007669"/>
    <property type="project" value="TreeGrafter"/>
</dbReference>
<dbReference type="GO" id="GO:0019843">
    <property type="term" value="F:rRNA binding"/>
    <property type="evidence" value="ECO:0007669"/>
    <property type="project" value="UniProtKB-UniRule"/>
</dbReference>
<dbReference type="GO" id="GO:0003735">
    <property type="term" value="F:structural constituent of ribosome"/>
    <property type="evidence" value="ECO:0007669"/>
    <property type="project" value="InterPro"/>
</dbReference>
<dbReference type="GO" id="GO:0000049">
    <property type="term" value="F:tRNA binding"/>
    <property type="evidence" value="ECO:0007669"/>
    <property type="project" value="UniProtKB-UniRule"/>
</dbReference>
<dbReference type="GO" id="GO:0006412">
    <property type="term" value="P:translation"/>
    <property type="evidence" value="ECO:0007669"/>
    <property type="project" value="UniProtKB-UniRule"/>
</dbReference>
<dbReference type="FunFam" id="1.10.8.50:FF:000001">
    <property type="entry name" value="30S ribosomal protein S13"/>
    <property type="match status" value="1"/>
</dbReference>
<dbReference type="FunFam" id="4.10.910.10:FF:000001">
    <property type="entry name" value="30S ribosomal protein S13"/>
    <property type="match status" value="1"/>
</dbReference>
<dbReference type="Gene3D" id="1.10.8.50">
    <property type="match status" value="1"/>
</dbReference>
<dbReference type="Gene3D" id="4.10.910.10">
    <property type="entry name" value="30s ribosomal protein s13, domain 2"/>
    <property type="match status" value="1"/>
</dbReference>
<dbReference type="HAMAP" id="MF_01315">
    <property type="entry name" value="Ribosomal_uS13"/>
    <property type="match status" value="1"/>
</dbReference>
<dbReference type="InterPro" id="IPR027437">
    <property type="entry name" value="Rbsml_uS13_C"/>
</dbReference>
<dbReference type="InterPro" id="IPR001892">
    <property type="entry name" value="Ribosomal_uS13"/>
</dbReference>
<dbReference type="InterPro" id="IPR010979">
    <property type="entry name" value="Ribosomal_uS13-like_H2TH"/>
</dbReference>
<dbReference type="InterPro" id="IPR019980">
    <property type="entry name" value="Ribosomal_uS13_bac-type"/>
</dbReference>
<dbReference type="InterPro" id="IPR018269">
    <property type="entry name" value="Ribosomal_uS13_CS"/>
</dbReference>
<dbReference type="NCBIfam" id="TIGR03631">
    <property type="entry name" value="uS13_bact"/>
    <property type="match status" value="1"/>
</dbReference>
<dbReference type="PANTHER" id="PTHR10871">
    <property type="entry name" value="30S RIBOSOMAL PROTEIN S13/40S RIBOSOMAL PROTEIN S18"/>
    <property type="match status" value="1"/>
</dbReference>
<dbReference type="PANTHER" id="PTHR10871:SF1">
    <property type="entry name" value="SMALL RIBOSOMAL SUBUNIT PROTEIN US13M"/>
    <property type="match status" value="1"/>
</dbReference>
<dbReference type="Pfam" id="PF00416">
    <property type="entry name" value="Ribosomal_S13"/>
    <property type="match status" value="1"/>
</dbReference>
<dbReference type="PIRSF" id="PIRSF002134">
    <property type="entry name" value="Ribosomal_S13"/>
    <property type="match status" value="1"/>
</dbReference>
<dbReference type="SUPFAM" id="SSF46946">
    <property type="entry name" value="S13-like H2TH domain"/>
    <property type="match status" value="1"/>
</dbReference>
<dbReference type="PROSITE" id="PS00646">
    <property type="entry name" value="RIBOSOMAL_S13_1"/>
    <property type="match status" value="1"/>
</dbReference>
<dbReference type="PROSITE" id="PS50159">
    <property type="entry name" value="RIBOSOMAL_S13_2"/>
    <property type="match status" value="1"/>
</dbReference>
<keyword id="KW-0687">Ribonucleoprotein</keyword>
<keyword id="KW-0689">Ribosomal protein</keyword>
<keyword id="KW-0694">RNA-binding</keyword>
<keyword id="KW-0699">rRNA-binding</keyword>
<keyword id="KW-0820">tRNA-binding</keyword>
<gene>
    <name evidence="1" type="primary">rpsM</name>
    <name type="ordered locus">SPN23F02220</name>
</gene>